<keyword id="KW-0066">ATP synthesis</keyword>
<keyword id="KW-0375">Hydrogen ion transport</keyword>
<keyword id="KW-0406">Ion transport</keyword>
<keyword id="KW-1185">Reference proteome</keyword>
<keyword id="KW-0813">Transport</keyword>
<name>VATB_DEIRA</name>
<reference key="1">
    <citation type="journal article" date="1999" name="Science">
        <title>Genome sequence of the radioresistant bacterium Deinococcus radiodurans R1.</title>
        <authorList>
            <person name="White O."/>
            <person name="Eisen J.A."/>
            <person name="Heidelberg J.F."/>
            <person name="Hickey E.K."/>
            <person name="Peterson J.D."/>
            <person name="Dodson R.J."/>
            <person name="Haft D.H."/>
            <person name="Gwinn M.L."/>
            <person name="Nelson W.C."/>
            <person name="Richardson D.L."/>
            <person name="Moffat K.S."/>
            <person name="Qin H."/>
            <person name="Jiang L."/>
            <person name="Pamphile W."/>
            <person name="Crosby M."/>
            <person name="Shen M."/>
            <person name="Vamathevan J.J."/>
            <person name="Lam P."/>
            <person name="McDonald L.A."/>
            <person name="Utterback T.R."/>
            <person name="Zalewski C."/>
            <person name="Makarova K.S."/>
            <person name="Aravind L."/>
            <person name="Daly M.J."/>
            <person name="Minton K.W."/>
            <person name="Fleischmann R.D."/>
            <person name="Ketchum K.A."/>
            <person name="Nelson K.E."/>
            <person name="Salzberg S.L."/>
            <person name="Smith H.O."/>
            <person name="Venter J.C."/>
            <person name="Fraser C.M."/>
        </authorList>
    </citation>
    <scope>NUCLEOTIDE SEQUENCE [LARGE SCALE GENOMIC DNA]</scope>
    <source>
        <strain>ATCC 13939 / DSM 20539 / JCM 16871 / CCUG 27074 / LMG 4051 / NBRC 15346 / NCIMB 9279 / VKM B-1422 / R1</strain>
    </source>
</reference>
<proteinExistence type="inferred from homology"/>
<sequence>MTLLQKEYNDVAYISGPLLFVNAASDLPNGAIVNIKDGNGKLRGGRVISVSDQNAVIQVFEETRGLDLATASVSLVEDVARLGVSKEMIGRRFDGLGRPIDGLPAVVAEQRLSVDGQPMNPAARAKPEEFIQTGISTIDVQTSLIRGQKLPIFSGSGLPHNELAAQIARQAKVPGHEGDFAVVFAAMGLTQREVSFFTQEFERTGALARSVLFLNKADDPAVERLLTPRMALTTAEYLAFEHGYHVLVILTDLTNYCEALREIGGAREEIPGRRGFPGYMYTDLASLYERAGVVEGKPGSVTQVPILSMPDDDITHPIPDLTGYITEGQIVVDRTLNSKGVFPPINPLPSLSRLQGNGIGKGKTRADHKNVADQLFAAYANGLDLRKLVAITGEDALTETDKLYLKFSDDFENYFIGQGDQDRSIDDSLTVAWGILSKLPQSQLTRLSKDSIDKYYGTKMDEMWKGGRSSI</sequence>
<feature type="chain" id="PRO_0000144677" description="V-type ATP synthase beta chain">
    <location>
        <begin position="1"/>
        <end position="471"/>
    </location>
</feature>
<organism>
    <name type="scientific">Deinococcus radiodurans (strain ATCC 13939 / DSM 20539 / JCM 16871 / CCUG 27074 / LMG 4051 / NBRC 15346 / NCIMB 9279 / VKM B-1422 / R1)</name>
    <dbReference type="NCBI Taxonomy" id="243230"/>
    <lineage>
        <taxon>Bacteria</taxon>
        <taxon>Thermotogati</taxon>
        <taxon>Deinococcota</taxon>
        <taxon>Deinococci</taxon>
        <taxon>Deinococcales</taxon>
        <taxon>Deinococcaceae</taxon>
        <taxon>Deinococcus</taxon>
    </lineage>
</organism>
<comment type="function">
    <text>Produces ATP from ADP in the presence of a proton gradient across the membrane. The V-type beta chain is a regulatory subunit.</text>
</comment>
<comment type="similarity">
    <text evidence="1">Belongs to the ATPase alpha/beta chains family.</text>
</comment>
<protein>
    <recommendedName>
        <fullName>V-type ATP synthase beta chain</fullName>
    </recommendedName>
    <alternativeName>
        <fullName>V-ATPase subunit B</fullName>
    </alternativeName>
</protein>
<evidence type="ECO:0000305" key="1"/>
<gene>
    <name type="primary">atpB</name>
    <name type="ordered locus">DR_0701</name>
</gene>
<accession>Q9RWG7</accession>
<dbReference type="EMBL" id="AE000513">
    <property type="protein sequence ID" value="AAF10279.1"/>
    <property type="molecule type" value="Genomic_DNA"/>
</dbReference>
<dbReference type="PIR" id="B75488">
    <property type="entry name" value="B75488"/>
</dbReference>
<dbReference type="RefSeq" id="NP_294424.1">
    <property type="nucleotide sequence ID" value="NC_001263.1"/>
</dbReference>
<dbReference type="RefSeq" id="WP_010887346.1">
    <property type="nucleotide sequence ID" value="NC_001263.1"/>
</dbReference>
<dbReference type="SMR" id="Q9RWG7"/>
<dbReference type="FunCoup" id="Q9RWG7">
    <property type="interactions" value="114"/>
</dbReference>
<dbReference type="STRING" id="243230.DR_0701"/>
<dbReference type="PaxDb" id="243230-DR_0701"/>
<dbReference type="EnsemblBacteria" id="AAF10279">
    <property type="protein sequence ID" value="AAF10279"/>
    <property type="gene ID" value="DR_0701"/>
</dbReference>
<dbReference type="GeneID" id="69516948"/>
<dbReference type="KEGG" id="dra:DR_0701"/>
<dbReference type="PATRIC" id="fig|243230.17.peg.879"/>
<dbReference type="eggNOG" id="COG1156">
    <property type="taxonomic scope" value="Bacteria"/>
</dbReference>
<dbReference type="HOGENOM" id="CLU_022916_0_0_0"/>
<dbReference type="InParanoid" id="Q9RWG7"/>
<dbReference type="OrthoDB" id="9802718at2"/>
<dbReference type="Proteomes" id="UP000002524">
    <property type="component" value="Chromosome 1"/>
</dbReference>
<dbReference type="GO" id="GO:0005524">
    <property type="term" value="F:ATP binding"/>
    <property type="evidence" value="ECO:0007669"/>
    <property type="project" value="UniProtKB-UniRule"/>
</dbReference>
<dbReference type="GO" id="GO:0046933">
    <property type="term" value="F:proton-transporting ATP synthase activity, rotational mechanism"/>
    <property type="evidence" value="ECO:0007669"/>
    <property type="project" value="UniProtKB-UniRule"/>
</dbReference>
<dbReference type="GO" id="GO:0042777">
    <property type="term" value="P:proton motive force-driven plasma membrane ATP synthesis"/>
    <property type="evidence" value="ECO:0007669"/>
    <property type="project" value="UniProtKB-UniRule"/>
</dbReference>
<dbReference type="CDD" id="cd18112">
    <property type="entry name" value="ATP-synt_V_A-type_beta_C"/>
    <property type="match status" value="1"/>
</dbReference>
<dbReference type="CDD" id="cd18118">
    <property type="entry name" value="ATP-synt_V_A-type_beta_N"/>
    <property type="match status" value="1"/>
</dbReference>
<dbReference type="CDD" id="cd01135">
    <property type="entry name" value="V_A-ATPase_B"/>
    <property type="match status" value="1"/>
</dbReference>
<dbReference type="Gene3D" id="3.40.50.12240">
    <property type="match status" value="1"/>
</dbReference>
<dbReference type="HAMAP" id="MF_00310">
    <property type="entry name" value="ATP_synth_B_arch"/>
    <property type="match status" value="1"/>
</dbReference>
<dbReference type="InterPro" id="IPR055190">
    <property type="entry name" value="ATP-synt_VA_C"/>
</dbReference>
<dbReference type="InterPro" id="IPR020003">
    <property type="entry name" value="ATPase_a/bsu_AS"/>
</dbReference>
<dbReference type="InterPro" id="IPR004100">
    <property type="entry name" value="ATPase_F1/V1/A1_a/bsu_N"/>
</dbReference>
<dbReference type="InterPro" id="IPR000194">
    <property type="entry name" value="ATPase_F1/V1/A1_a/bsu_nucl-bd"/>
</dbReference>
<dbReference type="InterPro" id="IPR027417">
    <property type="entry name" value="P-loop_NTPase"/>
</dbReference>
<dbReference type="InterPro" id="IPR022879">
    <property type="entry name" value="V-ATPase_su_B/beta"/>
</dbReference>
<dbReference type="NCBIfam" id="NF003235">
    <property type="entry name" value="PRK04196.1"/>
    <property type="match status" value="1"/>
</dbReference>
<dbReference type="PANTHER" id="PTHR43389">
    <property type="entry name" value="V-TYPE PROTON ATPASE SUBUNIT B"/>
    <property type="match status" value="1"/>
</dbReference>
<dbReference type="PANTHER" id="PTHR43389:SF4">
    <property type="entry name" value="V-TYPE PROTON ATPASE SUBUNIT B"/>
    <property type="match status" value="1"/>
</dbReference>
<dbReference type="Pfam" id="PF00006">
    <property type="entry name" value="ATP-synt_ab"/>
    <property type="match status" value="1"/>
</dbReference>
<dbReference type="Pfam" id="PF02874">
    <property type="entry name" value="ATP-synt_ab_N"/>
    <property type="match status" value="1"/>
</dbReference>
<dbReference type="Pfam" id="PF22919">
    <property type="entry name" value="ATP-synt_VA_C"/>
    <property type="match status" value="1"/>
</dbReference>
<dbReference type="PIRSF" id="PIRSF039114">
    <property type="entry name" value="V-ATPsynth_beta/V-ATPase_B"/>
    <property type="match status" value="1"/>
</dbReference>
<dbReference type="SUPFAM" id="SSF47917">
    <property type="entry name" value="C-terminal domain of alpha and beta subunits of F1 ATP synthase"/>
    <property type="match status" value="1"/>
</dbReference>
<dbReference type="SUPFAM" id="SSF52540">
    <property type="entry name" value="P-loop containing nucleoside triphosphate hydrolases"/>
    <property type="match status" value="1"/>
</dbReference>
<dbReference type="PROSITE" id="PS00152">
    <property type="entry name" value="ATPASE_ALPHA_BETA"/>
    <property type="match status" value="1"/>
</dbReference>